<reference key="1">
    <citation type="journal article" date="2002" name="Nature">
        <title>The genome sequence of Schizosaccharomyces pombe.</title>
        <authorList>
            <person name="Wood V."/>
            <person name="Gwilliam R."/>
            <person name="Rajandream M.A."/>
            <person name="Lyne M.H."/>
            <person name="Lyne R."/>
            <person name="Stewart A."/>
            <person name="Sgouros J.G."/>
            <person name="Peat N."/>
            <person name="Hayles J."/>
            <person name="Baker S.G."/>
            <person name="Basham D."/>
            <person name="Bowman S."/>
            <person name="Brooks K."/>
            <person name="Brown D."/>
            <person name="Brown S."/>
            <person name="Chillingworth T."/>
            <person name="Churcher C.M."/>
            <person name="Collins M."/>
            <person name="Connor R."/>
            <person name="Cronin A."/>
            <person name="Davis P."/>
            <person name="Feltwell T."/>
            <person name="Fraser A."/>
            <person name="Gentles S."/>
            <person name="Goble A."/>
            <person name="Hamlin N."/>
            <person name="Harris D.E."/>
            <person name="Hidalgo J."/>
            <person name="Hodgson G."/>
            <person name="Holroyd S."/>
            <person name="Hornsby T."/>
            <person name="Howarth S."/>
            <person name="Huckle E.J."/>
            <person name="Hunt S."/>
            <person name="Jagels K."/>
            <person name="James K.D."/>
            <person name="Jones L."/>
            <person name="Jones M."/>
            <person name="Leather S."/>
            <person name="McDonald S."/>
            <person name="McLean J."/>
            <person name="Mooney P."/>
            <person name="Moule S."/>
            <person name="Mungall K.L."/>
            <person name="Murphy L.D."/>
            <person name="Niblett D."/>
            <person name="Odell C."/>
            <person name="Oliver K."/>
            <person name="O'Neil S."/>
            <person name="Pearson D."/>
            <person name="Quail M.A."/>
            <person name="Rabbinowitsch E."/>
            <person name="Rutherford K.M."/>
            <person name="Rutter S."/>
            <person name="Saunders D."/>
            <person name="Seeger K."/>
            <person name="Sharp S."/>
            <person name="Skelton J."/>
            <person name="Simmonds M.N."/>
            <person name="Squares R."/>
            <person name="Squares S."/>
            <person name="Stevens K."/>
            <person name="Taylor K."/>
            <person name="Taylor R.G."/>
            <person name="Tivey A."/>
            <person name="Walsh S.V."/>
            <person name="Warren T."/>
            <person name="Whitehead S."/>
            <person name="Woodward J.R."/>
            <person name="Volckaert G."/>
            <person name="Aert R."/>
            <person name="Robben J."/>
            <person name="Grymonprez B."/>
            <person name="Weltjens I."/>
            <person name="Vanstreels E."/>
            <person name="Rieger M."/>
            <person name="Schaefer M."/>
            <person name="Mueller-Auer S."/>
            <person name="Gabel C."/>
            <person name="Fuchs M."/>
            <person name="Duesterhoeft A."/>
            <person name="Fritzc C."/>
            <person name="Holzer E."/>
            <person name="Moestl D."/>
            <person name="Hilbert H."/>
            <person name="Borzym K."/>
            <person name="Langer I."/>
            <person name="Beck A."/>
            <person name="Lehrach H."/>
            <person name="Reinhardt R."/>
            <person name="Pohl T.M."/>
            <person name="Eger P."/>
            <person name="Zimmermann W."/>
            <person name="Wedler H."/>
            <person name="Wambutt R."/>
            <person name="Purnelle B."/>
            <person name="Goffeau A."/>
            <person name="Cadieu E."/>
            <person name="Dreano S."/>
            <person name="Gloux S."/>
            <person name="Lelaure V."/>
            <person name="Mottier S."/>
            <person name="Galibert F."/>
            <person name="Aves S.J."/>
            <person name="Xiang Z."/>
            <person name="Hunt C."/>
            <person name="Moore K."/>
            <person name="Hurst S.M."/>
            <person name="Lucas M."/>
            <person name="Rochet M."/>
            <person name="Gaillardin C."/>
            <person name="Tallada V.A."/>
            <person name="Garzon A."/>
            <person name="Thode G."/>
            <person name="Daga R.R."/>
            <person name="Cruzado L."/>
            <person name="Jimenez J."/>
            <person name="Sanchez M."/>
            <person name="del Rey F."/>
            <person name="Benito J."/>
            <person name="Dominguez A."/>
            <person name="Revuelta J.L."/>
            <person name="Moreno S."/>
            <person name="Armstrong J."/>
            <person name="Forsburg S.L."/>
            <person name="Cerutti L."/>
            <person name="Lowe T."/>
            <person name="McCombie W.R."/>
            <person name="Paulsen I."/>
            <person name="Potashkin J."/>
            <person name="Shpakovski G.V."/>
            <person name="Ussery D."/>
            <person name="Barrell B.G."/>
            <person name="Nurse P."/>
        </authorList>
    </citation>
    <scope>NUCLEOTIDE SEQUENCE [LARGE SCALE GENOMIC DNA]</scope>
    <source>
        <strain>972 / ATCC 24843</strain>
    </source>
</reference>
<reference key="2">
    <citation type="journal article" date="2011" name="Science">
        <title>Comparative functional genomics of the fission yeasts.</title>
        <authorList>
            <person name="Rhind N."/>
            <person name="Chen Z."/>
            <person name="Yassour M."/>
            <person name="Thompson D.A."/>
            <person name="Haas B.J."/>
            <person name="Habib N."/>
            <person name="Wapinski I."/>
            <person name="Roy S."/>
            <person name="Lin M.F."/>
            <person name="Heiman D.I."/>
            <person name="Young S.K."/>
            <person name="Furuya K."/>
            <person name="Guo Y."/>
            <person name="Pidoux A."/>
            <person name="Chen H.M."/>
            <person name="Robbertse B."/>
            <person name="Goldberg J.M."/>
            <person name="Aoki K."/>
            <person name="Bayne E.H."/>
            <person name="Berlin A.M."/>
            <person name="Desjardins C.A."/>
            <person name="Dobbs E."/>
            <person name="Dukaj L."/>
            <person name="Fan L."/>
            <person name="FitzGerald M.G."/>
            <person name="French C."/>
            <person name="Gujja S."/>
            <person name="Hansen K."/>
            <person name="Keifenheim D."/>
            <person name="Levin J.Z."/>
            <person name="Mosher R.A."/>
            <person name="Mueller C.A."/>
            <person name="Pfiffner J."/>
            <person name="Priest M."/>
            <person name="Russ C."/>
            <person name="Smialowska A."/>
            <person name="Swoboda P."/>
            <person name="Sykes S.M."/>
            <person name="Vaughn M."/>
            <person name="Vengrova S."/>
            <person name="Yoder R."/>
            <person name="Zeng Q."/>
            <person name="Allshire R."/>
            <person name="Baulcombe D."/>
            <person name="Birren B.W."/>
            <person name="Brown W."/>
            <person name="Ekwall K."/>
            <person name="Kellis M."/>
            <person name="Leatherwood J."/>
            <person name="Levin H."/>
            <person name="Margalit H."/>
            <person name="Martienssen R."/>
            <person name="Nieduszynski C.A."/>
            <person name="Spatafora J.W."/>
            <person name="Friedman N."/>
            <person name="Dalgaard J.Z."/>
            <person name="Baumann P."/>
            <person name="Niki H."/>
            <person name="Regev A."/>
            <person name="Nusbaum C."/>
        </authorList>
    </citation>
    <scope>REVISION OF GENE MODEL</scope>
</reference>
<reference key="3">
    <citation type="journal article" date="2003" name="J. Biol. Chem.">
        <title>Novel essential DNA repair proteins Nse1 and Nse2 are subunits of the fission yeast Smc5-Smc6 complex.</title>
        <authorList>
            <person name="McDonald W.H."/>
            <person name="Pavlova Y."/>
            <person name="Yates J.R. III"/>
            <person name="Boddy M.N."/>
        </authorList>
    </citation>
    <scope>FUNCTION</scope>
    <scope>INTERACTION WITH SMC5 AND SMC6</scope>
    <scope>SUBCELLULAR LOCATION</scope>
    <scope>IDENTIFICATION BY MASS SPECTROMETRY</scope>
</reference>
<reference key="4">
    <citation type="journal article" date="2004" name="Mol. Biol. Cell">
        <title>Nse1, Nse2, and a novel subunit of the Smc5-Smc6 complex, Nse3, play a crucial role in meiosis.</title>
        <authorList>
            <person name="Pebernard S."/>
            <person name="McDonald W.H."/>
            <person name="Pavlova Y."/>
            <person name="Yates J.R. III"/>
            <person name="Boddy M.N."/>
        </authorList>
    </citation>
    <scope>IDENTIFICATION BY MASS SPECTROMETRY</scope>
</reference>
<reference key="5">
    <citation type="journal article" date="2005" name="Mol. Cell. Biol.">
        <title>Composition and architecture of the Schizosaccharomyces pombe Rad18 (Smc5-6) complex.</title>
        <authorList>
            <person name="Sergeant J."/>
            <person name="Taylor E."/>
            <person name="Palecek J."/>
            <person name="Fousteri M."/>
            <person name="Andrews E.A."/>
            <person name="Sweeney S."/>
            <person name="Shinagawa H."/>
            <person name="Watts F.Z."/>
            <person name="Lehmann A.R."/>
        </authorList>
    </citation>
    <scope>INTERACTION WITH NSE3 AND SMC5</scope>
</reference>
<reference key="6">
    <citation type="journal article" date="2005" name="Mol. Cell. Biol.">
        <title>Nse2, a component of the Smc5-6 complex, is a SUMO ligase required for the response to DNA damage.</title>
        <authorList>
            <person name="Andrews E.A."/>
            <person name="Palecek J."/>
            <person name="Sergeant J."/>
            <person name="Taylor E."/>
            <person name="Lehmann A.R."/>
            <person name="Watts F.Z."/>
        </authorList>
    </citation>
    <scope>FUNCTION</scope>
    <scope>INTERACTION WITH SMC5 AND SMC6</scope>
    <scope>AUTOSUMOYLATION</scope>
    <scope>MUTAGENESIS OF CYS-195 AND HIS-197</scope>
    <scope>REVISION OF GENE MODEL</scope>
</reference>
<reference key="7">
    <citation type="journal article" date="2006" name="Mol. Cell. Biol.">
        <title>The Nse5-Nse6 dimer mediates DNA repair roles of the Smc5-Smc6 complex.</title>
        <authorList>
            <person name="Pebernard S."/>
            <person name="Wohlschlegel J."/>
            <person name="McDonald W.H."/>
            <person name="Yates J.R. III"/>
            <person name="Boddy M.N."/>
        </authorList>
    </citation>
    <scope>IDENTIFICATION BY MASS SPECTROMETRY</scope>
</reference>
<reference key="8">
    <citation type="journal article" date="2006" name="Nat. Biotechnol.">
        <title>ORFeome cloning and global analysis of protein localization in the fission yeast Schizosaccharomyces pombe.</title>
        <authorList>
            <person name="Matsuyama A."/>
            <person name="Arai R."/>
            <person name="Yashiroda Y."/>
            <person name="Shirai A."/>
            <person name="Kamata A."/>
            <person name="Sekido S."/>
            <person name="Kobayashi Y."/>
            <person name="Hashimoto A."/>
            <person name="Hamamoto M."/>
            <person name="Hiraoka Y."/>
            <person name="Horinouchi S."/>
            <person name="Yoshida M."/>
        </authorList>
    </citation>
    <scope>SUBCELLULAR LOCATION [LARGE SCALE ANALYSIS]</scope>
</reference>
<name>NSE2_SCHPO</name>
<comment type="function">
    <text evidence="2 3">Acts as an E3 ligase mediating SUMO/Smt3 attachment to other proteins. Acts in a DNA repair pathway for removal of UV-induced DNA damage that is distinct from classical nucleotide excision repair and in repair of ionizing radiation damage. Functions in homologous recombination repair of DNA double strand breaks and in recovery of stalled replication forks. Plays a critical role in meiosis.</text>
</comment>
<comment type="pathway">
    <text>Protein modification; protein sumoylation.</text>
</comment>
<comment type="subunit">
    <text>Two subcomplexes smc5-smc6-nse2 and nse1-nse3-nse4 exist. These subcomplexes are then brought together via a number of interactions, forming the Smc5-Smc6 complex.</text>
</comment>
<comment type="interaction">
    <interactant intactId="EBI-605449">
        <id>Q4PIR3</id>
    </interactant>
    <interactant intactId="EBI-605466">
        <id>Q9Y7U4</id>
        <label>nse3</label>
    </interactant>
    <organismsDiffer>false</organismsDiffer>
    <experiments>2</experiments>
</comment>
<comment type="interaction">
    <interactant intactId="EBI-605449">
        <id>Q4PIR3</id>
    </interactant>
    <interactant intactId="EBI-1150368">
        <id>O13688</id>
        <label>nse6</label>
    </interactant>
    <organismsDiffer>false</organismsDiffer>
    <experiments>2</experiments>
</comment>
<comment type="interaction">
    <interactant intactId="EBI-605449">
        <id>Q4PIR3</id>
    </interactant>
    <interactant intactId="EBI-603756">
        <id>O13710</id>
        <label>smc5</label>
    </interactant>
    <organismsDiffer>false</organismsDiffer>
    <experiments>9</experiments>
</comment>
<comment type="interaction">
    <interactant intactId="EBI-605449">
        <id>Q4PIR3</id>
    </interactant>
    <interactant intactId="EBI-603745">
        <id>P53692</id>
        <label>smc6</label>
    </interactant>
    <organismsDiffer>false</organismsDiffer>
    <experiments>3</experiments>
</comment>
<comment type="subcellular location">
    <subcellularLocation>
        <location evidence="2 4">Nucleus</location>
    </subcellularLocation>
</comment>
<comment type="PTM">
    <text>Autosumoylated.</text>
</comment>
<comment type="similarity">
    <text evidence="5">Belongs to the NSE2 family.</text>
</comment>
<gene>
    <name type="primary">nse2</name>
    <name type="synonym">pli2</name>
    <name type="ORF">SPAC16A10.06c</name>
</gene>
<dbReference type="EC" id="2.3.2.-"/>
<dbReference type="EMBL" id="CU329670">
    <property type="protein sequence ID" value="CAJ01913.3"/>
    <property type="molecule type" value="Genomic_DNA"/>
</dbReference>
<dbReference type="RefSeq" id="XP_001713077.3">
    <property type="nucleotide sequence ID" value="XM_001713025.3"/>
</dbReference>
<dbReference type="SMR" id="Q4PIR3"/>
<dbReference type="BioGRID" id="278778">
    <property type="interactions" value="15"/>
</dbReference>
<dbReference type="ComplexPortal" id="CPX-25736">
    <property type="entry name" value="SMC5-SMC6 SUMO ligase complex"/>
</dbReference>
<dbReference type="FunCoup" id="Q4PIR3">
    <property type="interactions" value="159"/>
</dbReference>
<dbReference type="IntAct" id="Q4PIR3">
    <property type="interactions" value="5"/>
</dbReference>
<dbReference type="STRING" id="284812.Q4PIR3"/>
<dbReference type="iPTMnet" id="Q4PIR3"/>
<dbReference type="PaxDb" id="4896-SPAC16A10.06c.1"/>
<dbReference type="EnsemblFungi" id="SPAC16A10.06c.1">
    <property type="protein sequence ID" value="SPAC16A10.06c.1:pep"/>
    <property type="gene ID" value="SPAC16A10.06c"/>
</dbReference>
<dbReference type="PomBase" id="SPAC16A10.06c">
    <property type="gene designation" value="nse2"/>
</dbReference>
<dbReference type="VEuPathDB" id="FungiDB:SPAC16A10.06c"/>
<dbReference type="eggNOG" id="KOG2979">
    <property type="taxonomic scope" value="Eukaryota"/>
</dbReference>
<dbReference type="HOGENOM" id="CLU_1116301_0_0_1"/>
<dbReference type="InParanoid" id="Q4PIR3"/>
<dbReference type="OMA" id="VECKHIY"/>
<dbReference type="Reactome" id="R-SPO-3108214">
    <property type="pathway name" value="SUMOylation of DNA damage response and repair proteins"/>
</dbReference>
<dbReference type="UniPathway" id="UPA00886"/>
<dbReference type="PRO" id="PR:Q4PIR3"/>
<dbReference type="Proteomes" id="UP000002485">
    <property type="component" value="Chromosome I"/>
</dbReference>
<dbReference type="GO" id="GO:0005829">
    <property type="term" value="C:cytosol"/>
    <property type="evidence" value="ECO:0007005"/>
    <property type="project" value="PomBase"/>
</dbReference>
<dbReference type="GO" id="GO:0005634">
    <property type="term" value="C:nucleus"/>
    <property type="evidence" value="ECO:0000314"/>
    <property type="project" value="PomBase"/>
</dbReference>
<dbReference type="GO" id="GO:0030915">
    <property type="term" value="C:Smc5-Smc6 complex"/>
    <property type="evidence" value="ECO:0000314"/>
    <property type="project" value="PomBase"/>
</dbReference>
<dbReference type="GO" id="GO:0061665">
    <property type="term" value="F:SUMO ligase activity"/>
    <property type="evidence" value="ECO:0000314"/>
    <property type="project" value="PomBase"/>
</dbReference>
<dbReference type="GO" id="GO:0008270">
    <property type="term" value="F:zinc ion binding"/>
    <property type="evidence" value="ECO:0007669"/>
    <property type="project" value="UniProtKB-KW"/>
</dbReference>
<dbReference type="GO" id="GO:0000724">
    <property type="term" value="P:double-strand break repair via homologous recombination"/>
    <property type="evidence" value="ECO:0000315"/>
    <property type="project" value="PomBase"/>
</dbReference>
<dbReference type="GO" id="GO:0051321">
    <property type="term" value="P:meiotic cell cycle"/>
    <property type="evidence" value="ECO:0007669"/>
    <property type="project" value="UniProtKB-KW"/>
</dbReference>
<dbReference type="GO" id="GO:0016925">
    <property type="term" value="P:protein sumoylation"/>
    <property type="evidence" value="ECO:0000314"/>
    <property type="project" value="PomBase"/>
</dbReference>
<dbReference type="CDD" id="cd16651">
    <property type="entry name" value="SPL-RING_NSE2"/>
    <property type="match status" value="1"/>
</dbReference>
<dbReference type="Gene3D" id="3.30.40.10">
    <property type="entry name" value="Zinc/RING finger domain, C3HC4 (zinc finger)"/>
    <property type="match status" value="1"/>
</dbReference>
<dbReference type="InterPro" id="IPR026846">
    <property type="entry name" value="Nse2(Mms21)"/>
</dbReference>
<dbReference type="InterPro" id="IPR004181">
    <property type="entry name" value="Znf_MIZ"/>
</dbReference>
<dbReference type="InterPro" id="IPR013083">
    <property type="entry name" value="Znf_RING/FYVE/PHD"/>
</dbReference>
<dbReference type="PANTHER" id="PTHR21330">
    <property type="entry name" value="E3 SUMO-PROTEIN LIGASE NSE2"/>
    <property type="match status" value="1"/>
</dbReference>
<dbReference type="PANTHER" id="PTHR21330:SF1">
    <property type="entry name" value="E3 SUMO-PROTEIN LIGASE NSE2"/>
    <property type="match status" value="1"/>
</dbReference>
<dbReference type="Pfam" id="PF11789">
    <property type="entry name" value="zf-Nse"/>
    <property type="match status" value="1"/>
</dbReference>
<dbReference type="SUPFAM" id="SSF57850">
    <property type="entry name" value="RING/U-box"/>
    <property type="match status" value="1"/>
</dbReference>
<dbReference type="PROSITE" id="PS51044">
    <property type="entry name" value="ZF_SP_RING"/>
    <property type="match status" value="1"/>
</dbReference>
<keyword id="KW-0227">DNA damage</keyword>
<keyword id="KW-0233">DNA recombination</keyword>
<keyword id="KW-0234">DNA repair</keyword>
<keyword id="KW-0469">Meiosis</keyword>
<keyword id="KW-0479">Metal-binding</keyword>
<keyword id="KW-0539">Nucleus</keyword>
<keyword id="KW-1185">Reference proteome</keyword>
<keyword id="KW-0808">Transferase</keyword>
<keyword id="KW-0832">Ubl conjugation</keyword>
<keyword id="KW-0833">Ubl conjugation pathway</keyword>
<keyword id="KW-0862">Zinc</keyword>
<keyword id="KW-0863">Zinc-finger</keyword>
<organism>
    <name type="scientific">Schizosaccharomyces pombe (strain 972 / ATCC 24843)</name>
    <name type="common">Fission yeast</name>
    <dbReference type="NCBI Taxonomy" id="284812"/>
    <lineage>
        <taxon>Eukaryota</taxon>
        <taxon>Fungi</taxon>
        <taxon>Dikarya</taxon>
        <taxon>Ascomycota</taxon>
        <taxon>Taphrinomycotina</taxon>
        <taxon>Schizosaccharomycetes</taxon>
        <taxon>Schizosaccharomycetales</taxon>
        <taxon>Schizosaccharomycetaceae</taxon>
        <taxon>Schizosaccharomyces</taxon>
    </lineage>
</organism>
<feature type="chain" id="PRO_0000218992" description="E3 SUMO-protein ligase nse2">
    <location>
        <begin position="1"/>
        <end position="250"/>
    </location>
</feature>
<feature type="zinc finger region" description="SP-RING-type" evidence="1">
    <location>
        <begin position="164"/>
        <end position="243"/>
    </location>
</feature>
<feature type="binding site" evidence="1">
    <location>
        <position position="195"/>
    </location>
    <ligand>
        <name>Zn(2+)</name>
        <dbReference type="ChEBI" id="CHEBI:29105"/>
    </ligand>
</feature>
<feature type="binding site" evidence="1">
    <location>
        <position position="197"/>
    </location>
    <ligand>
        <name>Zn(2+)</name>
        <dbReference type="ChEBI" id="CHEBI:29105"/>
    </ligand>
</feature>
<feature type="binding site" evidence="1">
    <location>
        <position position="214"/>
    </location>
    <ligand>
        <name>Zn(2+)</name>
        <dbReference type="ChEBI" id="CHEBI:29105"/>
    </ligand>
</feature>
<feature type="binding site" evidence="1">
    <location>
        <position position="219"/>
    </location>
    <ligand>
        <name>Zn(2+)</name>
        <dbReference type="ChEBI" id="CHEBI:29105"/>
    </ligand>
</feature>
<feature type="mutagenesis site" description="No sumoylation activity." evidence="3">
    <original>C</original>
    <variation>S</variation>
    <location>
        <position position="195"/>
    </location>
</feature>
<feature type="mutagenesis site" description="No sumoylation activity." evidence="3">
    <original>H</original>
    <variation>A</variation>
    <location>
        <position position="197"/>
    </location>
</feature>
<sequence length="250" mass="28676">MSEAQLKTSLEALSQNLLPGNQNHCSFDFQLKEIDDSIKQVIKCALVAAEIKNNECLDMLDSGIRELLDAKQRLLLMQQSVDTLANKTSENISDFENKSLLDIYTQIFKELIQEYEEKSDYGKYGTQGEYIEFKKTIWHEQNTDGSDFPSMKTFFNVMNTEEQEADEVMVYSATFDNRCPLTLQPIVHPILSTACNHFYEKDAILSLLNPTCVCPVVGCEARLQRSLLKEDEILERRLRRAQEISNLKEA</sequence>
<proteinExistence type="evidence at protein level"/>
<evidence type="ECO:0000255" key="1">
    <source>
        <dbReference type="PROSITE-ProRule" id="PRU00452"/>
    </source>
</evidence>
<evidence type="ECO:0000269" key="2">
    <source>
    </source>
</evidence>
<evidence type="ECO:0000269" key="3">
    <source>
    </source>
</evidence>
<evidence type="ECO:0000269" key="4">
    <source>
    </source>
</evidence>
<evidence type="ECO:0000305" key="5"/>
<protein>
    <recommendedName>
        <fullName>E3 SUMO-protein ligase nse2</fullName>
        <ecNumber>2.3.2.-</ecNumber>
    </recommendedName>
    <alternativeName>
        <fullName evidence="5">E3 SUMO-protein transferase nse2</fullName>
    </alternativeName>
    <alternativeName>
        <fullName>Non-structural maintenance of chromosomes element 2</fullName>
        <shortName>Non-SMC element 2</shortName>
    </alternativeName>
</protein>
<accession>Q4PIR3</accession>